<name>RRP3_ASPOR</name>
<reference key="1">
    <citation type="journal article" date="2005" name="Nature">
        <title>Genome sequencing and analysis of Aspergillus oryzae.</title>
        <authorList>
            <person name="Machida M."/>
            <person name="Asai K."/>
            <person name="Sano M."/>
            <person name="Tanaka T."/>
            <person name="Kumagai T."/>
            <person name="Terai G."/>
            <person name="Kusumoto K."/>
            <person name="Arima T."/>
            <person name="Akita O."/>
            <person name="Kashiwagi Y."/>
            <person name="Abe K."/>
            <person name="Gomi K."/>
            <person name="Horiuchi H."/>
            <person name="Kitamoto K."/>
            <person name="Kobayashi T."/>
            <person name="Takeuchi M."/>
            <person name="Denning D.W."/>
            <person name="Galagan J.E."/>
            <person name="Nierman W.C."/>
            <person name="Yu J."/>
            <person name="Archer D.B."/>
            <person name="Bennett J.W."/>
            <person name="Bhatnagar D."/>
            <person name="Cleveland T.E."/>
            <person name="Fedorova N.D."/>
            <person name="Gotoh O."/>
            <person name="Horikawa H."/>
            <person name="Hosoyama A."/>
            <person name="Ichinomiya M."/>
            <person name="Igarashi R."/>
            <person name="Iwashita K."/>
            <person name="Juvvadi P.R."/>
            <person name="Kato M."/>
            <person name="Kato Y."/>
            <person name="Kin T."/>
            <person name="Kokubun A."/>
            <person name="Maeda H."/>
            <person name="Maeyama N."/>
            <person name="Maruyama J."/>
            <person name="Nagasaki H."/>
            <person name="Nakajima T."/>
            <person name="Oda K."/>
            <person name="Okada K."/>
            <person name="Paulsen I."/>
            <person name="Sakamoto K."/>
            <person name="Sawano T."/>
            <person name="Takahashi M."/>
            <person name="Takase K."/>
            <person name="Terabayashi Y."/>
            <person name="Wortman J.R."/>
            <person name="Yamada O."/>
            <person name="Yamagata Y."/>
            <person name="Anazawa H."/>
            <person name="Hata Y."/>
            <person name="Koide Y."/>
            <person name="Komori T."/>
            <person name="Koyama Y."/>
            <person name="Minetoki T."/>
            <person name="Suharnan S."/>
            <person name="Tanaka A."/>
            <person name="Isono K."/>
            <person name="Kuhara S."/>
            <person name="Ogasawara N."/>
            <person name="Kikuchi H."/>
        </authorList>
    </citation>
    <scope>NUCLEOTIDE SEQUENCE [LARGE SCALE GENOMIC DNA]</scope>
    <source>
        <strain>ATCC 42149 / RIB 40</strain>
    </source>
</reference>
<accession>Q2UNB7</accession>
<feature type="chain" id="PRO_0000232269" description="ATP-dependent rRNA helicase rrp3">
    <location>
        <begin position="1"/>
        <end position="472"/>
    </location>
</feature>
<feature type="domain" description="Helicase ATP-binding" evidence="2">
    <location>
        <begin position="83"/>
        <end position="254"/>
    </location>
</feature>
<feature type="domain" description="Helicase C-terminal" evidence="3">
    <location>
        <begin position="282"/>
        <end position="426"/>
    </location>
</feature>
<feature type="region of interest" description="Disordered" evidence="4">
    <location>
        <begin position="1"/>
        <end position="52"/>
    </location>
</feature>
<feature type="region of interest" description="Disordered" evidence="4">
    <location>
        <begin position="443"/>
        <end position="472"/>
    </location>
</feature>
<feature type="short sequence motif" description="Q motif" evidence="5">
    <location>
        <begin position="52"/>
        <end position="80"/>
    </location>
</feature>
<feature type="short sequence motif" description="DEAD box" evidence="5">
    <location>
        <begin position="202"/>
        <end position="205"/>
    </location>
</feature>
<feature type="compositionally biased region" description="Basic and acidic residues" evidence="4">
    <location>
        <begin position="10"/>
        <end position="24"/>
    </location>
</feature>
<feature type="compositionally biased region" description="Basic residues" evidence="4">
    <location>
        <begin position="452"/>
        <end position="462"/>
    </location>
</feature>
<feature type="binding site" evidence="2">
    <location>
        <begin position="96"/>
        <end position="103"/>
    </location>
    <ligand>
        <name>ATP</name>
        <dbReference type="ChEBI" id="CHEBI:30616"/>
    </ligand>
</feature>
<evidence type="ECO:0000250" key="1">
    <source>
        <dbReference type="UniProtKB" id="P38712"/>
    </source>
</evidence>
<evidence type="ECO:0000255" key="2">
    <source>
        <dbReference type="PROSITE-ProRule" id="PRU00541"/>
    </source>
</evidence>
<evidence type="ECO:0000255" key="3">
    <source>
        <dbReference type="PROSITE-ProRule" id="PRU00542"/>
    </source>
</evidence>
<evidence type="ECO:0000256" key="4">
    <source>
        <dbReference type="SAM" id="MobiDB-lite"/>
    </source>
</evidence>
<evidence type="ECO:0000305" key="5"/>
<proteinExistence type="inferred from homology"/>
<gene>
    <name evidence="1" type="primary">rrp3</name>
    <name type="ORF">AO090001000428</name>
</gene>
<comment type="function">
    <text evidence="1">ATP-dependent rRNA helicase required for pre-ribosomal RNA processing. Involved in the maturation of the 35S-pre-rRNA and to its cleavage to mature 18S rRNA.</text>
</comment>
<comment type="catalytic activity">
    <reaction evidence="1">
        <text>ATP + H2O = ADP + phosphate + H(+)</text>
        <dbReference type="Rhea" id="RHEA:13065"/>
        <dbReference type="ChEBI" id="CHEBI:15377"/>
        <dbReference type="ChEBI" id="CHEBI:15378"/>
        <dbReference type="ChEBI" id="CHEBI:30616"/>
        <dbReference type="ChEBI" id="CHEBI:43474"/>
        <dbReference type="ChEBI" id="CHEBI:456216"/>
        <dbReference type="EC" id="3.6.4.13"/>
    </reaction>
</comment>
<comment type="subunit">
    <text evidence="1">Interacts with the SSU processome.</text>
</comment>
<comment type="subcellular location">
    <subcellularLocation>
        <location evidence="5">Nucleus</location>
    </subcellularLocation>
</comment>
<comment type="domain">
    <text evidence="5">The Q motif is unique to and characteristic of the DEAD box family of RNA helicases and controls ATP binding and hydrolysis.</text>
</comment>
<comment type="similarity">
    <text evidence="5">Belongs to the DEAD box helicase family. DDX47/RRP3 subfamily.</text>
</comment>
<protein>
    <recommendedName>
        <fullName evidence="5">ATP-dependent rRNA helicase rrp3</fullName>
        <ecNumber evidence="1">3.6.4.13</ecNumber>
    </recommendedName>
</protein>
<dbReference type="EC" id="3.6.4.13" evidence="1"/>
<dbReference type="EMBL" id="BA000050">
    <property type="protein sequence ID" value="BAE56948.1"/>
    <property type="molecule type" value="Genomic_DNA"/>
</dbReference>
<dbReference type="RefSeq" id="XP_001818950.1">
    <property type="nucleotide sequence ID" value="XM_001818898.2"/>
</dbReference>
<dbReference type="SMR" id="Q2UNB7"/>
<dbReference type="STRING" id="510516.Q2UNB7"/>
<dbReference type="EnsemblFungi" id="BAE56948">
    <property type="protein sequence ID" value="BAE56948"/>
    <property type="gene ID" value="AO090001000428"/>
</dbReference>
<dbReference type="GeneID" id="5990921"/>
<dbReference type="KEGG" id="aor:AO090001000428"/>
<dbReference type="VEuPathDB" id="FungiDB:AO090001000428"/>
<dbReference type="HOGENOM" id="CLU_003041_1_1_1"/>
<dbReference type="OMA" id="GIGIKCC"/>
<dbReference type="OrthoDB" id="74515at5052"/>
<dbReference type="Proteomes" id="UP000006564">
    <property type="component" value="Chromosome 2"/>
</dbReference>
<dbReference type="GO" id="GO:0005829">
    <property type="term" value="C:cytosol"/>
    <property type="evidence" value="ECO:0007669"/>
    <property type="project" value="TreeGrafter"/>
</dbReference>
<dbReference type="GO" id="GO:0005634">
    <property type="term" value="C:nucleus"/>
    <property type="evidence" value="ECO:0007669"/>
    <property type="project" value="UniProtKB-SubCell"/>
</dbReference>
<dbReference type="GO" id="GO:0005524">
    <property type="term" value="F:ATP binding"/>
    <property type="evidence" value="ECO:0007669"/>
    <property type="project" value="UniProtKB-KW"/>
</dbReference>
<dbReference type="GO" id="GO:0016887">
    <property type="term" value="F:ATP hydrolysis activity"/>
    <property type="evidence" value="ECO:0007669"/>
    <property type="project" value="RHEA"/>
</dbReference>
<dbReference type="GO" id="GO:0003723">
    <property type="term" value="F:RNA binding"/>
    <property type="evidence" value="ECO:0007669"/>
    <property type="project" value="UniProtKB-KW"/>
</dbReference>
<dbReference type="GO" id="GO:0003724">
    <property type="term" value="F:RNA helicase activity"/>
    <property type="evidence" value="ECO:0007669"/>
    <property type="project" value="UniProtKB-EC"/>
</dbReference>
<dbReference type="GO" id="GO:0006364">
    <property type="term" value="P:rRNA processing"/>
    <property type="evidence" value="ECO:0007669"/>
    <property type="project" value="UniProtKB-KW"/>
</dbReference>
<dbReference type="CDD" id="cd17954">
    <property type="entry name" value="DEADc_DDX47"/>
    <property type="match status" value="1"/>
</dbReference>
<dbReference type="CDD" id="cd18787">
    <property type="entry name" value="SF2_C_DEAD"/>
    <property type="match status" value="1"/>
</dbReference>
<dbReference type="Gene3D" id="3.40.50.300">
    <property type="entry name" value="P-loop containing nucleotide triphosphate hydrolases"/>
    <property type="match status" value="2"/>
</dbReference>
<dbReference type="InterPro" id="IPR044765">
    <property type="entry name" value="DDX47/Rrp3_DEADc"/>
</dbReference>
<dbReference type="InterPro" id="IPR011545">
    <property type="entry name" value="DEAD/DEAH_box_helicase_dom"/>
</dbReference>
<dbReference type="InterPro" id="IPR050079">
    <property type="entry name" value="DEAD_box_RNA_helicase"/>
</dbReference>
<dbReference type="InterPro" id="IPR014001">
    <property type="entry name" value="Helicase_ATP-bd"/>
</dbReference>
<dbReference type="InterPro" id="IPR001650">
    <property type="entry name" value="Helicase_C-like"/>
</dbReference>
<dbReference type="InterPro" id="IPR027417">
    <property type="entry name" value="P-loop_NTPase"/>
</dbReference>
<dbReference type="InterPro" id="IPR000629">
    <property type="entry name" value="RNA-helicase_DEAD-box_CS"/>
</dbReference>
<dbReference type="InterPro" id="IPR014014">
    <property type="entry name" value="RNA_helicase_DEAD_Q_motif"/>
</dbReference>
<dbReference type="PANTHER" id="PTHR47959">
    <property type="entry name" value="ATP-DEPENDENT RNA HELICASE RHLE-RELATED"/>
    <property type="match status" value="1"/>
</dbReference>
<dbReference type="PANTHER" id="PTHR47959:SF20">
    <property type="entry name" value="RNA HELICASE"/>
    <property type="match status" value="1"/>
</dbReference>
<dbReference type="Pfam" id="PF00270">
    <property type="entry name" value="DEAD"/>
    <property type="match status" value="1"/>
</dbReference>
<dbReference type="Pfam" id="PF00271">
    <property type="entry name" value="Helicase_C"/>
    <property type="match status" value="1"/>
</dbReference>
<dbReference type="SMART" id="SM00487">
    <property type="entry name" value="DEXDc"/>
    <property type="match status" value="1"/>
</dbReference>
<dbReference type="SMART" id="SM00490">
    <property type="entry name" value="HELICc"/>
    <property type="match status" value="1"/>
</dbReference>
<dbReference type="SUPFAM" id="SSF52540">
    <property type="entry name" value="P-loop containing nucleoside triphosphate hydrolases"/>
    <property type="match status" value="1"/>
</dbReference>
<dbReference type="PROSITE" id="PS00039">
    <property type="entry name" value="DEAD_ATP_HELICASE"/>
    <property type="match status" value="1"/>
</dbReference>
<dbReference type="PROSITE" id="PS51192">
    <property type="entry name" value="HELICASE_ATP_BIND_1"/>
    <property type="match status" value="1"/>
</dbReference>
<dbReference type="PROSITE" id="PS51194">
    <property type="entry name" value="HELICASE_CTER"/>
    <property type="match status" value="1"/>
</dbReference>
<dbReference type="PROSITE" id="PS51195">
    <property type="entry name" value="Q_MOTIF"/>
    <property type="match status" value="1"/>
</dbReference>
<keyword id="KW-0067">ATP-binding</keyword>
<keyword id="KW-0347">Helicase</keyword>
<keyword id="KW-0378">Hydrolase</keyword>
<keyword id="KW-0547">Nucleotide-binding</keyword>
<keyword id="KW-0539">Nucleus</keyword>
<keyword id="KW-1185">Reference proteome</keyword>
<keyword id="KW-0690">Ribosome biogenesis</keyword>
<keyword id="KW-0694">RNA-binding</keyword>
<keyword id="KW-0698">rRNA processing</keyword>
<organism>
    <name type="scientific">Aspergillus oryzae (strain ATCC 42149 / RIB 40)</name>
    <name type="common">Yellow koji mold</name>
    <dbReference type="NCBI Taxonomy" id="510516"/>
    <lineage>
        <taxon>Eukaryota</taxon>
        <taxon>Fungi</taxon>
        <taxon>Dikarya</taxon>
        <taxon>Ascomycota</taxon>
        <taxon>Pezizomycotina</taxon>
        <taxon>Eurotiomycetes</taxon>
        <taxon>Eurotiomycetidae</taxon>
        <taxon>Eurotiales</taxon>
        <taxon>Aspergillaceae</taxon>
        <taxon>Aspergillus</taxon>
        <taxon>Aspergillus subgen. Circumdati</taxon>
    </lineage>
</organism>
<sequence length="472" mass="51998">MPAIKKRKIAREAPQQEDHSDSEAHSSASEDAAPNTTEQEQEPSEAPKQAPKSFKELGLIEQLCEACDSMGYKAPTAIQAEAIPLALQGRDLIGLAETGSGKTAAFALPILQALMDKPSSFFGLVLAPTRELAYQISQAFEGLGSTISVRSTVLVGGMDMVSQSIALGKKPHIIVATPGRLLDHLENTKGFSLRNLKYLVMDEADRLLDMDFGPILDKILKVLPRERRTYLFSATMSSKVESLQRASLQNPLRVAVSSSKFQTVSTLQQSYIFIPHKHKDLYLVYLLNEFVGQSCIIFCRTVHETQRLSFFLRLLGFGAIPLHGQLSQSARLGALGKFRSRSRDILVATDVAARGLDIPSVDVVLNFDLPGDSKTFIHRIGRTARAGKSGVAISFATQYDVEAWLRIEGALGKKLPEYPAEKDEVMVLAERVSEAQRSAILEMKNYDEKKGSRGKKFAKGKRSREDMDQEEG</sequence>